<proteinExistence type="evidence at protein level"/>
<name>AGRE_NOSS1</name>
<organism>
    <name type="scientific">Nostoc sp. (strain PCC 7120 / SAG 25.82 / UTEX 2576)</name>
    <dbReference type="NCBI Taxonomy" id="103690"/>
    <lineage>
        <taxon>Bacteria</taxon>
        <taxon>Bacillati</taxon>
        <taxon>Cyanobacteriota</taxon>
        <taxon>Cyanophyceae</taxon>
        <taxon>Nostocales</taxon>
        <taxon>Nostocaceae</taxon>
        <taxon>Nostoc</taxon>
    </lineage>
</organism>
<comment type="function">
    <text evidence="1 2">Bifunctional enzyme involved in a cyanobacterial arginine utilization pathway that produces glutamate and enables cellular adaptation to nitrogen fluctuations (PubMed:30636068). Catalyzes the hydrolysis of arginine to ornithine, with the release of ammonia and carbon dioxide (PubMed:30636068, PubMed:32198136). Then, catalyzes the conversion of ornithine to proline, with the release of ammonia (PubMed:30636068).</text>
</comment>
<comment type="catalytic activity">
    <reaction evidence="1 2">
        <text>L-arginine + 2 H2O + 2 H(+) = L-ornithine + 2 NH4(+) + CO2</text>
        <dbReference type="Rhea" id="RHEA:78779"/>
        <dbReference type="ChEBI" id="CHEBI:15377"/>
        <dbReference type="ChEBI" id="CHEBI:15378"/>
        <dbReference type="ChEBI" id="CHEBI:16526"/>
        <dbReference type="ChEBI" id="CHEBI:28938"/>
        <dbReference type="ChEBI" id="CHEBI:32682"/>
        <dbReference type="ChEBI" id="CHEBI:46911"/>
        <dbReference type="EC" id="3.5.3.27"/>
    </reaction>
    <physiologicalReaction direction="left-to-right" evidence="1 2">
        <dbReference type="Rhea" id="RHEA:78780"/>
    </physiologicalReaction>
</comment>
<comment type="catalytic activity">
    <reaction evidence="1">
        <text>L-ornithine = L-proline + NH4(+)</text>
        <dbReference type="Rhea" id="RHEA:24368"/>
        <dbReference type="ChEBI" id="CHEBI:28938"/>
        <dbReference type="ChEBI" id="CHEBI:46911"/>
        <dbReference type="ChEBI" id="CHEBI:60039"/>
        <dbReference type="EC" id="4.3.1.12"/>
    </reaction>
    <physiologicalReaction direction="left-to-right" evidence="1">
        <dbReference type="Rhea" id="RHEA:24369"/>
    </physiologicalReaction>
</comment>
<comment type="cofactor">
    <cofactor evidence="1 2">
        <name>NAD(+)</name>
        <dbReference type="ChEBI" id="CHEBI:57540"/>
    </cofactor>
    <text evidence="1">Required for ornithine cyclodeaminase activity (PubMed:30636068). Can be partially substituted by NADP(+) (PubMed:30636068).</text>
</comment>
<comment type="activity regulation">
    <text evidence="1">Ornithine cyclodeaminase activity is inhibited by ATP.</text>
</comment>
<comment type="biophysicochemical properties">
    <kinetics>
        <KM evidence="1">6 mM for arginine</KM>
        <KM evidence="2">224.8 uM for arginine (for full-length AgrE)</KM>
        <KM evidence="2">237.9 uM for arginine (for NTD-AgrE)</KM>
        <KM evidence="1">50 mM for ornithine</KM>
        <text evidence="2">kcat is 271.1 min(-1) with arginine as substrate (for full-length AgrE) (PubMed:32198136). kcat is 292.6 min(-1) with arginine as substrate (for NTD-AgrE) (PubMed:32198136).</text>
    </kinetics>
</comment>
<comment type="subunit">
    <text evidence="2">Homotetramer.</text>
</comment>
<comment type="induction">
    <text evidence="1">Expressed at higher levels in vegetative cells than in heterocysts.</text>
</comment>
<comment type="domain">
    <text evidence="1 2">The N-terminal domain (NTD) is responsible for arginine dihydrolase activity (PubMed:30636068, PubMed:32198136). The C-terminal domain (CTD) is responsible for ornithine cyclodeaminase activity (PubMed:30636068). The L-ornithine generated from arginine is probably channeled between the active sites of arginine dihydrolase (NTD) and ornithine cyclodeaminase (CTD) (PubMed:32198136).</text>
</comment>
<comment type="disruption phenotype">
    <text evidence="1">Neither proline nor glutamate is observed in filaments of the deletion mutant when incubated in the presence of arginine or ornithine (PubMed:30636068). Mutant shows substantial diazotrophic growth (PubMed:30636068).</text>
</comment>
<comment type="miscellaneous">
    <text evidence="2">Lee et al. were unable to characterize ornithine cyclodeaminase activity using full-length AgrE expressed and purified from E.coli, suggesting that a cyanobacterial factor required for activity is missing when AgrE is expressed in E.coli.</text>
</comment>
<comment type="similarity">
    <text evidence="5">In the N-terminal section; belongs to the DDAH family.</text>
</comment>
<comment type="similarity">
    <text evidence="5">In the C-terminal section; belongs to the AgrE/ArgZ ornithine cyclodeaminase family.</text>
</comment>
<reference key="1">
    <citation type="journal article" date="2001" name="DNA Res.">
        <title>Complete genomic sequence of the filamentous nitrogen-fixing cyanobacterium Anabaena sp. strain PCC 7120.</title>
        <authorList>
            <person name="Kaneko T."/>
            <person name="Nakamura Y."/>
            <person name="Wolk C.P."/>
            <person name="Kuritz T."/>
            <person name="Sasamoto S."/>
            <person name="Watanabe A."/>
            <person name="Iriguchi M."/>
            <person name="Ishikawa A."/>
            <person name="Kawashima K."/>
            <person name="Kimura T."/>
            <person name="Kishida Y."/>
            <person name="Kohara M."/>
            <person name="Matsumoto M."/>
            <person name="Matsuno A."/>
            <person name="Muraki A."/>
            <person name="Nakazaki N."/>
            <person name="Shimpo S."/>
            <person name="Sugimoto M."/>
            <person name="Takazawa M."/>
            <person name="Yamada M."/>
            <person name="Yasuda M."/>
            <person name="Tabata S."/>
        </authorList>
    </citation>
    <scope>NUCLEOTIDE SEQUENCE [LARGE SCALE GENOMIC DNA]</scope>
    <source>
        <strain>PCC 7120 / SAG 25.82 / UTEX 2576</strain>
    </source>
</reference>
<reference key="2">
    <citation type="journal article" date="2019" name="Mol. Microbiol.">
        <title>Catabolic pathway of arginine in Anabaena involves a novel bifunctional enzyme that produces proline from arginine.</title>
        <authorList>
            <person name="Burnat M."/>
            <person name="Picossi S."/>
            <person name="Valladares A."/>
            <person name="Herrero A."/>
            <person name="Flores E."/>
        </authorList>
    </citation>
    <scope>FUNCTION</scope>
    <scope>CATALYTIC ACTIVITY</scope>
    <scope>COFACTOR</scope>
    <scope>ACTIVITY REGULATION</scope>
    <scope>BIOPHYSICOCHEMICAL PROPERTIES</scope>
    <scope>INDUCTION</scope>
    <scope>DOMAIN</scope>
    <scope>DISRUPTION PHENOTYPE</scope>
    <source>
        <strain>PCC 7120 / SAG 25.82 / UTEX 2576</strain>
    </source>
</reference>
<reference evidence="9 10 11" key="3">
    <citation type="journal article" date="2020" name="J. Biol. Chem.">
        <title>Structural and mutational analyses of the bifunctional arginine dihydrolase and ornithine cyclodeaminase AgrE from the cyanobacterium Anabaena.</title>
        <authorList>
            <person name="Lee H."/>
            <person name="Rhee S."/>
        </authorList>
    </citation>
    <scope>X-RAY CRYSTALLOGRAPHY (2.05 ANGSTROMS) OF APOENZYME AND IN COMPLEX WITH L-ORNITHINE AND NAD(+) AND OF MUTANT ALA-264 IN COMPLEX WITH ARGININE</scope>
    <scope>FUNCTION</scope>
    <scope>CATALYTIC ACTIVITY</scope>
    <scope>COFACTOR</scope>
    <scope>BIOPHYSICOCHEMICAL PROPERTIES</scope>
    <scope>SUBUNIT</scope>
    <scope>DOMAIN</scope>
    <scope>ACTIVE SITE</scope>
    <scope>MUTAGENESIS OF ASN-22; ASP-65; ASN-71; ARG-90; GLU-118; ASP-122; ARG-139; TYR-167; HIS-168; ASP-170; ASN-219 AND CYS-264</scope>
    <source>
        <strain>PCC 7120 / SAG 25.82 / UTEX 2576</strain>
    </source>
</reference>
<evidence type="ECO:0000269" key="1">
    <source>
    </source>
</evidence>
<evidence type="ECO:0000269" key="2">
    <source>
    </source>
</evidence>
<evidence type="ECO:0000303" key="3">
    <source>
    </source>
</evidence>
<evidence type="ECO:0000303" key="4">
    <source>
    </source>
</evidence>
<evidence type="ECO:0000305" key="5"/>
<evidence type="ECO:0000305" key="6">
    <source>
    </source>
</evidence>
<evidence type="ECO:0000305" key="7">
    <source>
    </source>
</evidence>
<evidence type="ECO:0000312" key="8">
    <source>
        <dbReference type="EMBL" id="BAB76694.1"/>
    </source>
</evidence>
<evidence type="ECO:0007744" key="9">
    <source>
        <dbReference type="PDB" id="6LRF"/>
    </source>
</evidence>
<evidence type="ECO:0007744" key="10">
    <source>
        <dbReference type="PDB" id="6LRG"/>
    </source>
</evidence>
<evidence type="ECO:0007744" key="11">
    <source>
        <dbReference type="PDB" id="6LRH"/>
    </source>
</evidence>
<evidence type="ECO:0007829" key="12">
    <source>
        <dbReference type="PDB" id="6LRF"/>
    </source>
</evidence>
<evidence type="ECO:0007829" key="13">
    <source>
        <dbReference type="PDB" id="6LRG"/>
    </source>
</evidence>
<gene>
    <name evidence="3" type="primary">agrE</name>
    <name evidence="8" type="ordered locus">alr4995</name>
</gene>
<sequence>MTSRIRFLMCPPDHYDVDYVINPWMEGNIHKSSRDRAVEQWQGLYQILKEHAIVDLVTPQKGWPDLVFTANAGLVLGDNVVLSRFLHKERQGEEPYFKEWFEGNGYTVYELPKDLPFEGAGDALLDREGRWLWAGYGFRSELDSHPYLAKWLDIEVLSLRLIDERFYHLDTCFCPLANGYLLYYPGAFDSYSNRLIEMRVAPEKRIAIAEADAVNFACNTVNVESIVIMNKASDALKQSLTGVGFQVLETPLTEFLKAGGAAKCLTLRVTEPVRDEVHANVYVESRIIRIEGHLLDSGLINRALDMIVDTGGSFQVLNFNLGEQRQSTSAAEVKVSAPSHEVMEEIISLLIDLGAVDLPQDERDAKLEPVIQDGVAPDDFYVSTIYPTEVRINGQWIKVENQRMDGAIAITQTPNGLLAQCKILRDLKAGEQVIVDVLGIRTIRKTESREQRNTQEFSFMSGGVSSERRVELVVEQVAWELRKIRDAGGKVVVTAGPVVIHTGGGEHLSRLIREGYVQALLGGNAIAVHDIEQNMMGTSLGVDMKRGVAVRGGHRHHLKVINTIRRHGSIAKGVESGIIRSGVMYECVRNQIPFVLAGSIRDDGPLPDTQMDLIKAQEEYAKHLEGAEMILMLSSMLHSIGVGNMTPAGVKMVCVDINPAVVTKLSDRGSIESVGVVTDVGLFLSLLTQQLDKLTSPYVSKVG</sequence>
<keyword id="KW-0002">3D-structure</keyword>
<keyword id="KW-0378">Hydrolase</keyword>
<keyword id="KW-0456">Lyase</keyword>
<keyword id="KW-0520">NAD</keyword>
<keyword id="KW-0547">Nucleotide-binding</keyword>
<keyword id="KW-1185">Reference proteome</keyword>
<accession>Q8YMD9</accession>
<protein>
    <recommendedName>
        <fullName evidence="4">Bifunctional arginine dihydrolase/ornithine cyclodeaminase AgrE</fullName>
    </recommendedName>
    <alternativeName>
        <fullName evidence="3">Arginine-guanidine removing enzyme</fullName>
    </alternativeName>
    <domain>
        <recommendedName>
            <fullName evidence="3">Arginine dihydrolase</fullName>
            <shortName evidence="3">Arg dihydrolase</shortName>
            <ecNumber evidence="1 2">3.5.3.27</ecNumber>
        </recommendedName>
    </domain>
    <domain>
        <recommendedName>
            <fullName evidence="3">Ornithine cyclodeaminase</fullName>
            <shortName evidence="5">OCD</shortName>
            <ecNumber evidence="1">4.3.1.12</ecNumber>
        </recommendedName>
    </domain>
</protein>
<dbReference type="EC" id="3.5.3.27" evidence="1 2"/>
<dbReference type="EC" id="4.3.1.12" evidence="1"/>
<dbReference type="EMBL" id="BA000019">
    <property type="protein sequence ID" value="BAB76694.1"/>
    <property type="molecule type" value="Genomic_DNA"/>
</dbReference>
<dbReference type="PIR" id="AC2430">
    <property type="entry name" value="AC2430"/>
</dbReference>
<dbReference type="RefSeq" id="WP_010999121.1">
    <property type="nucleotide sequence ID" value="NZ_RSCN01000014.1"/>
</dbReference>
<dbReference type="PDB" id="6LRF">
    <property type="method" value="X-ray"/>
    <property type="resolution" value="2.05 A"/>
    <property type="chains" value="A/B=1-703"/>
</dbReference>
<dbReference type="PDB" id="6LRG">
    <property type="method" value="X-ray"/>
    <property type="resolution" value="2.41 A"/>
    <property type="chains" value="A/B=1-703"/>
</dbReference>
<dbReference type="PDB" id="6LRH">
    <property type="method" value="X-ray"/>
    <property type="resolution" value="2.71 A"/>
    <property type="chains" value="A/B=1-703"/>
</dbReference>
<dbReference type="PDBsum" id="6LRF"/>
<dbReference type="PDBsum" id="6LRG"/>
<dbReference type="PDBsum" id="6LRH"/>
<dbReference type="SMR" id="Q8YMD9"/>
<dbReference type="STRING" id="103690.gene:10497053"/>
<dbReference type="KEGG" id="ana:alr4995"/>
<dbReference type="eggNOG" id="COG1834">
    <property type="taxonomic scope" value="Bacteria"/>
</dbReference>
<dbReference type="eggNOG" id="COG1915">
    <property type="taxonomic scope" value="Bacteria"/>
</dbReference>
<dbReference type="OrthoDB" id="5386290at2"/>
<dbReference type="BioCyc" id="MetaCyc:MONOMER-21305"/>
<dbReference type="Proteomes" id="UP000002483">
    <property type="component" value="Chromosome"/>
</dbReference>
<dbReference type="GO" id="GO:0016787">
    <property type="term" value="F:hydrolase activity"/>
    <property type="evidence" value="ECO:0007669"/>
    <property type="project" value="UniProtKB-KW"/>
</dbReference>
<dbReference type="GO" id="GO:0016829">
    <property type="term" value="F:lyase activity"/>
    <property type="evidence" value="ECO:0007669"/>
    <property type="project" value="UniProtKB-KW"/>
</dbReference>
<dbReference type="GO" id="GO:0000166">
    <property type="term" value="F:nucleotide binding"/>
    <property type="evidence" value="ECO:0007669"/>
    <property type="project" value="UniProtKB-KW"/>
</dbReference>
<dbReference type="CDD" id="cd12144">
    <property type="entry name" value="SDH_N_domain"/>
    <property type="match status" value="1"/>
</dbReference>
<dbReference type="Gene3D" id="3.75.10.10">
    <property type="entry name" value="L-arginine/glycine Amidinotransferase, Chain A"/>
    <property type="match status" value="1"/>
</dbReference>
<dbReference type="Gene3D" id="3.30.70.2690">
    <property type="entry name" value="LOR/SDH bifunctional enzyme, conserved domain"/>
    <property type="match status" value="1"/>
</dbReference>
<dbReference type="Gene3D" id="3.40.50.10690">
    <property type="entry name" value="putative lor/sdh protein like domains"/>
    <property type="match status" value="1"/>
</dbReference>
<dbReference type="InterPro" id="IPR005239">
    <property type="entry name" value="ArgZ/ArgE-like"/>
</dbReference>
<dbReference type="InterPro" id="IPR048964">
    <property type="entry name" value="ArgZ/ArgE-like_C_1st"/>
</dbReference>
<dbReference type="InterPro" id="IPR048963">
    <property type="entry name" value="ArgZ/ArgE-like_C_2nd"/>
</dbReference>
<dbReference type="InterPro" id="IPR007545">
    <property type="entry name" value="LOR/SDH_bifunc_enz_cons_dom"/>
</dbReference>
<dbReference type="InterPro" id="IPR043009">
    <property type="entry name" value="LOR/SDH_bifunc_enz_cons_dom_sf"/>
</dbReference>
<dbReference type="NCBIfam" id="TIGR00300">
    <property type="entry name" value="TIGR00300 family protein"/>
    <property type="match status" value="1"/>
</dbReference>
<dbReference type="Pfam" id="PF21571">
    <property type="entry name" value="ArgZ-like_C_1st"/>
    <property type="match status" value="1"/>
</dbReference>
<dbReference type="Pfam" id="PF21570">
    <property type="entry name" value="ArgZ-like_C_2nd"/>
    <property type="match status" value="1"/>
</dbReference>
<dbReference type="Pfam" id="PF19420">
    <property type="entry name" value="DDAH_eukar"/>
    <property type="match status" value="1"/>
</dbReference>
<dbReference type="Pfam" id="PF04455">
    <property type="entry name" value="Saccharop_dh_N"/>
    <property type="match status" value="1"/>
</dbReference>
<dbReference type="SUPFAM" id="SSF55909">
    <property type="entry name" value="Pentein"/>
    <property type="match status" value="1"/>
</dbReference>
<feature type="chain" id="PRO_0000460630" description="Bifunctional arginine dihydrolase/ornithine cyclodeaminase AgrE">
    <location>
        <begin position="1"/>
        <end position="703"/>
    </location>
</feature>
<feature type="region of interest" description="Arginine dihydrolase" evidence="6">
    <location>
        <begin position="10"/>
        <end position="269"/>
    </location>
</feature>
<feature type="region of interest" description="Ornithine cyclodeaminase" evidence="6">
    <location>
        <begin position="285"/>
        <end position="694"/>
    </location>
</feature>
<feature type="active site" description="Proton donor/acceptor" evidence="7">
    <location>
        <position position="168"/>
    </location>
</feature>
<feature type="active site" description="Nucleophile" evidence="7">
    <location>
        <position position="264"/>
    </location>
</feature>
<feature type="binding site" evidence="2 11">
    <location>
        <position position="22"/>
    </location>
    <ligand>
        <name>L-arginine</name>
        <dbReference type="ChEBI" id="CHEBI:32682"/>
    </ligand>
</feature>
<feature type="binding site" evidence="2 10">
    <location>
        <position position="22"/>
    </location>
    <ligand>
        <name>L-ornithine</name>
        <dbReference type="ChEBI" id="CHEBI:46911"/>
    </ligand>
</feature>
<feature type="binding site" evidence="2 11">
    <location>
        <position position="65"/>
    </location>
    <ligand>
        <name>L-arginine</name>
        <dbReference type="ChEBI" id="CHEBI:32682"/>
    </ligand>
</feature>
<feature type="binding site" evidence="2 11">
    <location>
        <position position="71"/>
    </location>
    <ligand>
        <name>L-arginine</name>
        <dbReference type="ChEBI" id="CHEBI:32682"/>
    </ligand>
</feature>
<feature type="binding site" evidence="2 11">
    <location>
        <position position="90"/>
    </location>
    <ligand>
        <name>L-arginine</name>
        <dbReference type="ChEBI" id="CHEBI:32682"/>
    </ligand>
</feature>
<feature type="binding site" evidence="2 10">
    <location>
        <position position="90"/>
    </location>
    <ligand>
        <name>L-ornithine</name>
        <dbReference type="ChEBI" id="CHEBI:46911"/>
    </ligand>
</feature>
<feature type="binding site" evidence="2 11">
    <location>
        <position position="139"/>
    </location>
    <ligand>
        <name>L-arginine</name>
        <dbReference type="ChEBI" id="CHEBI:32682"/>
    </ligand>
</feature>
<feature type="binding site" evidence="2 10">
    <location>
        <position position="139"/>
    </location>
    <ligand>
        <name>L-ornithine</name>
        <dbReference type="ChEBI" id="CHEBI:46911"/>
    </ligand>
</feature>
<feature type="binding site" evidence="2 10">
    <location>
        <position position="168"/>
    </location>
    <ligand>
        <name>L-ornithine</name>
        <dbReference type="ChEBI" id="CHEBI:46911"/>
    </ligand>
</feature>
<feature type="binding site" evidence="2 11">
    <location>
        <position position="170"/>
    </location>
    <ligand>
        <name>L-arginine</name>
        <dbReference type="ChEBI" id="CHEBI:32682"/>
    </ligand>
</feature>
<feature type="binding site" evidence="2 11">
    <location>
        <position position="258"/>
    </location>
    <ligand>
        <name>L-arginine</name>
        <dbReference type="ChEBI" id="CHEBI:32682"/>
    </ligand>
</feature>
<feature type="binding site" evidence="2 10">
    <location>
        <position position="264"/>
    </location>
    <ligand>
        <name>L-ornithine</name>
        <dbReference type="ChEBI" id="CHEBI:46911"/>
    </ligand>
</feature>
<feature type="binding site" evidence="2 10">
    <location>
        <position position="524"/>
    </location>
    <ligand>
        <name>NAD(+)</name>
        <dbReference type="ChEBI" id="CHEBI:57540"/>
    </ligand>
</feature>
<feature type="binding site" evidence="2 10">
    <location>
        <position position="525"/>
    </location>
    <ligand>
        <name>NAD(+)</name>
        <dbReference type="ChEBI" id="CHEBI:57540"/>
    </ligand>
</feature>
<feature type="binding site" evidence="2 10">
    <location>
        <position position="603"/>
    </location>
    <ligand>
        <name>NAD(+)</name>
        <dbReference type="ChEBI" id="CHEBI:57540"/>
    </ligand>
</feature>
<feature type="binding site" evidence="2 10">
    <location>
        <position position="635"/>
    </location>
    <ligand>
        <name>NAD(+)</name>
        <dbReference type="ChEBI" id="CHEBI:57540"/>
    </ligand>
</feature>
<feature type="binding site" evidence="2 10">
    <location>
        <position position="636"/>
    </location>
    <ligand>
        <name>NAD(+)</name>
        <dbReference type="ChEBI" id="CHEBI:57540"/>
    </ligand>
</feature>
<feature type="binding site" evidence="2 10">
    <location>
        <position position="637"/>
    </location>
    <ligand>
        <name>NAD(+)</name>
        <dbReference type="ChEBI" id="CHEBI:57540"/>
    </ligand>
</feature>
<feature type="binding site" evidence="2 10">
    <location>
        <position position="638"/>
    </location>
    <ligand>
        <name>NAD(+)</name>
        <dbReference type="ChEBI" id="CHEBI:57540"/>
    </ligand>
</feature>
<feature type="binding site" evidence="2 10">
    <location>
        <position position="656"/>
    </location>
    <ligand>
        <name>NAD(+)</name>
        <dbReference type="ChEBI" id="CHEBI:57540"/>
    </ligand>
</feature>
<feature type="binding site" evidence="2 10">
    <location>
        <position position="679"/>
    </location>
    <ligand>
        <name>NAD(+)</name>
        <dbReference type="ChEBI" id="CHEBI:57540"/>
    </ligand>
</feature>
<feature type="binding site" evidence="2 10">
    <location>
        <position position="680"/>
    </location>
    <ligand>
        <name>NAD(+)</name>
        <dbReference type="ChEBI" id="CHEBI:57540"/>
    </ligand>
</feature>
<feature type="site" description="Key determinant for dihydrolase activity" evidence="7">
    <location>
        <position position="71"/>
    </location>
</feature>
<feature type="mutagenesis site" description="Loss of arginine dihydrolase activity." evidence="2">
    <original>N</original>
    <variation>A</variation>
    <location>
        <position position="22"/>
    </location>
</feature>
<feature type="mutagenesis site" description="Shows residual arginine dihydrolase activity." evidence="2">
    <original>D</original>
    <variation>A</variation>
    <location>
        <position position="65"/>
    </location>
</feature>
<feature type="mutagenesis site" description="Shows residual arginine dihydrolase activity." evidence="2">
    <original>N</original>
    <variation>A</variation>
    <variation>D</variation>
    <location>
        <position position="71"/>
    </location>
</feature>
<feature type="mutagenesis site" description="Loss of arginine dihydrolase activity." evidence="2">
    <original>R</original>
    <variation>A</variation>
    <location>
        <position position="90"/>
    </location>
</feature>
<feature type="mutagenesis site" description="Loss of arginine dihydrolase activity." evidence="2">
    <original>E</original>
    <variation>A</variation>
    <location>
        <position position="118"/>
    </location>
</feature>
<feature type="mutagenesis site" description="Loss of arginine dihydrolase activity." evidence="2">
    <original>D</original>
    <variation>A</variation>
    <variation>N</variation>
    <location>
        <position position="122"/>
    </location>
</feature>
<feature type="mutagenesis site" description="Shows residual arginine dihydrolase activity." evidence="2">
    <original>R</original>
    <variation>A</variation>
    <location>
        <position position="139"/>
    </location>
</feature>
<feature type="mutagenesis site" description="Retains 9% of arginine dihydrolase activity." evidence="2">
    <original>Y</original>
    <variation>F</variation>
    <location>
        <position position="167"/>
    </location>
</feature>
<feature type="mutagenesis site" description="Loss of arginine dihydrolase activity." evidence="2">
    <original>H</original>
    <variation>A</variation>
    <location>
        <position position="168"/>
    </location>
</feature>
<feature type="mutagenesis site" description="Loss of arginine dihydrolase activity." evidence="2">
    <original>D</original>
    <variation>A</variation>
    <variation>N</variation>
    <location>
        <position position="170"/>
    </location>
</feature>
<feature type="mutagenesis site" description="Loss of arginine dihydrolase activity." evidence="2">
    <original>N</original>
    <variation>A</variation>
    <location>
        <position position="219"/>
    </location>
</feature>
<feature type="mutagenesis site" description="Loss of arginine dihydrolase activity." evidence="2">
    <original>C</original>
    <variation>A</variation>
    <location>
        <position position="264"/>
    </location>
</feature>
<feature type="strand" evidence="12">
    <location>
        <begin position="6"/>
        <end position="9"/>
    </location>
</feature>
<feature type="turn" evidence="12">
    <location>
        <begin position="23"/>
        <end position="27"/>
    </location>
</feature>
<feature type="helix" evidence="12">
    <location>
        <begin position="34"/>
        <end position="49"/>
    </location>
</feature>
<feature type="strand" evidence="12">
    <location>
        <begin position="52"/>
        <end position="56"/>
    </location>
</feature>
<feature type="helix" evidence="12">
    <location>
        <begin position="64"/>
        <end position="67"/>
    </location>
</feature>
<feature type="helix" evidence="12">
    <location>
        <begin position="69"/>
        <end position="71"/>
    </location>
</feature>
<feature type="strand" evidence="12">
    <location>
        <begin position="72"/>
        <end position="76"/>
    </location>
</feature>
<feature type="strand" evidence="12">
    <location>
        <begin position="79"/>
        <end position="82"/>
    </location>
</feature>
<feature type="helix" evidence="12">
    <location>
        <begin position="88"/>
        <end position="91"/>
    </location>
</feature>
<feature type="helix" evidence="12">
    <location>
        <begin position="94"/>
        <end position="103"/>
    </location>
</feature>
<feature type="strand" evidence="12">
    <location>
        <begin position="107"/>
        <end position="109"/>
    </location>
</feature>
<feature type="helix" evidence="12">
    <location>
        <begin position="119"/>
        <end position="121"/>
    </location>
</feature>
<feature type="strand" evidence="12">
    <location>
        <begin position="123"/>
        <end position="125"/>
    </location>
</feature>
<feature type="strand" evidence="12">
    <location>
        <begin position="132"/>
        <end position="140"/>
    </location>
</feature>
<feature type="helix" evidence="12">
    <location>
        <begin position="142"/>
        <end position="144"/>
    </location>
</feature>
<feature type="helix" evidence="12">
    <location>
        <begin position="145"/>
        <end position="152"/>
    </location>
</feature>
<feature type="strand" evidence="12">
    <location>
        <begin position="154"/>
        <end position="161"/>
    </location>
</feature>
<feature type="helix" evidence="12">
    <location>
        <begin position="169"/>
        <end position="171"/>
    </location>
</feature>
<feature type="strand" evidence="12">
    <location>
        <begin position="173"/>
        <end position="175"/>
    </location>
</feature>
<feature type="helix" evidence="12">
    <location>
        <begin position="177"/>
        <end position="179"/>
    </location>
</feature>
<feature type="strand" evidence="12">
    <location>
        <begin position="181"/>
        <end position="183"/>
    </location>
</feature>
<feature type="helix" evidence="12">
    <location>
        <begin position="185"/>
        <end position="187"/>
    </location>
</feature>
<feature type="helix" evidence="12">
    <location>
        <begin position="190"/>
        <end position="199"/>
    </location>
</feature>
<feature type="helix" evidence="12">
    <location>
        <begin position="202"/>
        <end position="204"/>
    </location>
</feature>
<feature type="strand" evidence="12">
    <location>
        <begin position="205"/>
        <end position="207"/>
    </location>
</feature>
<feature type="helix" evidence="12">
    <location>
        <begin position="210"/>
        <end position="213"/>
    </location>
</feature>
<feature type="turn" evidence="12">
    <location>
        <begin position="214"/>
        <end position="218"/>
    </location>
</feature>
<feature type="strand" evidence="12">
    <location>
        <begin position="224"/>
        <end position="230"/>
    </location>
</feature>
<feature type="helix" evidence="12">
    <location>
        <begin position="234"/>
        <end position="242"/>
    </location>
</feature>
<feature type="strand" evidence="12">
    <location>
        <begin position="246"/>
        <end position="249"/>
    </location>
</feature>
<feature type="helix" evidence="12">
    <location>
        <begin position="253"/>
        <end position="256"/>
    </location>
</feature>
<feature type="turn" evidence="12">
    <location>
        <begin position="257"/>
        <end position="259"/>
    </location>
</feature>
<feature type="turn" evidence="12">
    <location>
        <begin position="262"/>
        <end position="265"/>
    </location>
</feature>
<feature type="strand" evidence="12">
    <location>
        <begin position="284"/>
        <end position="293"/>
    </location>
</feature>
<feature type="helix" evidence="12">
    <location>
        <begin position="294"/>
        <end position="297"/>
    </location>
</feature>
<feature type="helix" evidence="12">
    <location>
        <begin position="299"/>
        <end position="310"/>
    </location>
</feature>
<feature type="strand" evidence="12">
    <location>
        <begin position="313"/>
        <end position="320"/>
    </location>
</feature>
<feature type="strand" evidence="12">
    <location>
        <begin position="329"/>
        <end position="339"/>
    </location>
</feature>
<feature type="helix" evidence="12">
    <location>
        <begin position="340"/>
        <end position="352"/>
    </location>
</feature>
<feature type="helix" evidence="12">
    <location>
        <begin position="359"/>
        <end position="361"/>
    </location>
</feature>
<feature type="strand" evidence="12">
    <location>
        <begin position="366"/>
        <end position="369"/>
    </location>
</feature>
<feature type="strand" evidence="12">
    <location>
        <begin position="388"/>
        <end position="392"/>
    </location>
</feature>
<feature type="strand" evidence="12">
    <location>
        <begin position="395"/>
        <end position="401"/>
    </location>
</feature>
<feature type="strand" evidence="12">
    <location>
        <begin position="407"/>
        <end position="413"/>
    </location>
</feature>
<feature type="strand" evidence="12">
    <location>
        <begin position="416"/>
        <end position="422"/>
    </location>
</feature>
<feature type="helix" evidence="12">
    <location>
        <begin position="424"/>
        <end position="426"/>
    </location>
</feature>
<feature type="strand" evidence="12">
    <location>
        <begin position="432"/>
        <end position="442"/>
    </location>
</feature>
<feature type="helix" evidence="12">
    <location>
        <begin position="446"/>
        <end position="449"/>
    </location>
</feature>
<feature type="helix" evidence="12">
    <location>
        <begin position="467"/>
        <end position="486"/>
    </location>
</feature>
<feature type="strand" evidence="12">
    <location>
        <begin position="491"/>
        <end position="495"/>
    </location>
</feature>
<feature type="helix" evidence="12">
    <location>
        <begin position="498"/>
        <end position="502"/>
    </location>
</feature>
<feature type="helix" evidence="12">
    <location>
        <begin position="505"/>
        <end position="513"/>
    </location>
</feature>
<feature type="strand" evidence="12">
    <location>
        <begin position="518"/>
        <end position="523"/>
    </location>
</feature>
<feature type="helix" evidence="12">
    <location>
        <begin position="524"/>
        <end position="536"/>
    </location>
</feature>
<feature type="strand" evidence="12">
    <location>
        <begin position="537"/>
        <end position="539"/>
    </location>
</feature>
<feature type="turn" evidence="13">
    <location>
        <begin position="544"/>
        <end position="546"/>
    </location>
</feature>
<feature type="helix" evidence="12">
    <location>
        <begin position="555"/>
        <end position="567"/>
    </location>
</feature>
<feature type="helix" evidence="12">
    <location>
        <begin position="570"/>
        <end position="575"/>
    </location>
</feature>
<feature type="helix" evidence="12">
    <location>
        <begin position="583"/>
        <end position="589"/>
    </location>
</feature>
<feature type="strand" evidence="12">
    <location>
        <begin position="594"/>
        <end position="597"/>
    </location>
</feature>
<feature type="helix" evidence="12">
    <location>
        <begin position="613"/>
        <end position="624"/>
    </location>
</feature>
<feature type="strand" evidence="12">
    <location>
        <begin position="628"/>
        <end position="634"/>
    </location>
</feature>
<feature type="helix" evidence="12">
    <location>
        <begin position="637"/>
        <end position="645"/>
    </location>
</feature>
<feature type="strand" evidence="12">
    <location>
        <begin position="650"/>
        <end position="658"/>
    </location>
</feature>
<feature type="turn" evidence="12">
    <location>
        <begin position="659"/>
        <end position="661"/>
    </location>
</feature>
<feature type="helix" evidence="12">
    <location>
        <begin position="662"/>
        <end position="665"/>
    </location>
</feature>
<feature type="turn" evidence="12">
    <location>
        <begin position="670"/>
        <end position="672"/>
    </location>
</feature>
<feature type="strand" evidence="12">
    <location>
        <begin position="673"/>
        <end position="678"/>
    </location>
</feature>
<feature type="helix" evidence="12">
    <location>
        <begin position="680"/>
        <end position="693"/>
    </location>
</feature>